<proteinExistence type="evidence at protein level"/>
<dbReference type="EMBL" id="AY591908">
    <property type="protein sequence ID" value="AAU04517.1"/>
    <property type="molecule type" value="mRNA"/>
</dbReference>
<dbReference type="EMBL" id="AJ844915">
    <property type="protein sequence ID" value="CAH59970.1"/>
    <property type="molecule type" value="mRNA"/>
</dbReference>
<dbReference type="EMBL" id="AL954713">
    <property type="status" value="NOT_ANNOTATED_CDS"/>
    <property type="molecule type" value="Genomic_DNA"/>
</dbReference>
<dbReference type="EMBL" id="BC139398">
    <property type="protein sequence ID" value="AAI39399.1"/>
    <property type="molecule type" value="mRNA"/>
</dbReference>
<dbReference type="EMBL" id="BC139407">
    <property type="protein sequence ID" value="AAI39408.1"/>
    <property type="molecule type" value="mRNA"/>
</dbReference>
<dbReference type="CCDS" id="CCDS16126.1">
    <molecule id="Q64HY3-1"/>
</dbReference>
<dbReference type="RefSeq" id="NP_001005343.1">
    <molecule id="Q64HY3-1"/>
    <property type="nucleotide sequence ID" value="NM_001005343.3"/>
</dbReference>
<dbReference type="RefSeq" id="NP_001396512.1">
    <molecule id="Q64HY3-1"/>
    <property type="nucleotide sequence ID" value="NM_001409583.1"/>
</dbReference>
<dbReference type="SMR" id="Q64HY3"/>
<dbReference type="FunCoup" id="Q64HY3">
    <property type="interactions" value="10"/>
</dbReference>
<dbReference type="STRING" id="10090.ENSMUSP00000088322"/>
<dbReference type="iPTMnet" id="Q64HY3"/>
<dbReference type="PhosphoSitePlus" id="Q64HY3"/>
<dbReference type="PaxDb" id="10090-ENSMUSP00000088322"/>
<dbReference type="ProteomicsDB" id="263300">
    <molecule id="Q64HY3-1"/>
</dbReference>
<dbReference type="ProteomicsDB" id="263301">
    <molecule id="Q64HY3-2"/>
</dbReference>
<dbReference type="Antibodypedia" id="57975">
    <property type="antibodies" value="17 antibodies from 6 providers"/>
</dbReference>
<dbReference type="DNASU" id="381373"/>
<dbReference type="Ensembl" id="ENSMUST00000090813.6">
    <molecule id="Q64HY3-1"/>
    <property type="protein sequence ID" value="ENSMUSP00000088322.6"/>
    <property type="gene ID" value="ENSMUSG00000068859.6"/>
</dbReference>
<dbReference type="GeneID" id="381373"/>
<dbReference type="KEGG" id="mmu:381373"/>
<dbReference type="UCSC" id="uc008kcj.2">
    <molecule id="Q64HY3-1"/>
    <property type="organism name" value="mouse"/>
</dbReference>
<dbReference type="AGR" id="MGI:3574660"/>
<dbReference type="CTD" id="100131390"/>
<dbReference type="MGI" id="MGI:3574660">
    <property type="gene designation" value="Sp9"/>
</dbReference>
<dbReference type="VEuPathDB" id="HostDB:ENSMUSG00000068859"/>
<dbReference type="eggNOG" id="KOG1721">
    <property type="taxonomic scope" value="Eukaryota"/>
</dbReference>
<dbReference type="GeneTree" id="ENSGT00940000162304"/>
<dbReference type="HOGENOM" id="CLU_019484_4_1_1"/>
<dbReference type="InParanoid" id="Q64HY3"/>
<dbReference type="OMA" id="WVCESVG"/>
<dbReference type="OrthoDB" id="6365676at2759"/>
<dbReference type="PhylomeDB" id="Q64HY3"/>
<dbReference type="TreeFam" id="TF350150"/>
<dbReference type="BioGRID-ORCS" id="381373">
    <property type="hits" value="2 hits in 79 CRISPR screens"/>
</dbReference>
<dbReference type="PRO" id="PR:Q64HY3"/>
<dbReference type="Proteomes" id="UP000000589">
    <property type="component" value="Chromosome 2"/>
</dbReference>
<dbReference type="RNAct" id="Q64HY3">
    <property type="molecule type" value="protein"/>
</dbReference>
<dbReference type="Bgee" id="ENSMUSG00000068859">
    <property type="expression patterns" value="Expressed in olfactory bulb and 28 other cell types or tissues"/>
</dbReference>
<dbReference type="GO" id="GO:0005634">
    <property type="term" value="C:nucleus"/>
    <property type="evidence" value="ECO:0007669"/>
    <property type="project" value="UniProtKB-SubCell"/>
</dbReference>
<dbReference type="GO" id="GO:0003677">
    <property type="term" value="F:DNA binding"/>
    <property type="evidence" value="ECO:0000250"/>
    <property type="project" value="MGI"/>
</dbReference>
<dbReference type="GO" id="GO:1990837">
    <property type="term" value="F:sequence-specific double-stranded DNA binding"/>
    <property type="evidence" value="ECO:0007669"/>
    <property type="project" value="Ensembl"/>
</dbReference>
<dbReference type="GO" id="GO:0008270">
    <property type="term" value="F:zinc ion binding"/>
    <property type="evidence" value="ECO:0007669"/>
    <property type="project" value="UniProtKB-KW"/>
</dbReference>
<dbReference type="GO" id="GO:0030326">
    <property type="term" value="P:embryonic limb morphogenesis"/>
    <property type="evidence" value="ECO:0000315"/>
    <property type="project" value="UniProtKB"/>
</dbReference>
<dbReference type="CDD" id="cd22549">
    <property type="entry name" value="SP9_N"/>
    <property type="match status" value="1"/>
</dbReference>
<dbReference type="FunFam" id="3.30.160.60:FF:000077">
    <property type="entry name" value="Sp8 transcription factor"/>
    <property type="match status" value="1"/>
</dbReference>
<dbReference type="FunFam" id="3.30.160.60:FF:000014">
    <property type="entry name" value="Transcription factor Sp3"/>
    <property type="match status" value="1"/>
</dbReference>
<dbReference type="FunFam" id="3.30.160.60:FF:000026">
    <property type="entry name" value="Transcription factor Sp3"/>
    <property type="match status" value="1"/>
</dbReference>
<dbReference type="Gene3D" id="3.30.160.60">
    <property type="entry name" value="Classic Zinc Finger"/>
    <property type="match status" value="3"/>
</dbReference>
<dbReference type="InterPro" id="IPR036236">
    <property type="entry name" value="Znf_C2H2_sf"/>
</dbReference>
<dbReference type="InterPro" id="IPR013087">
    <property type="entry name" value="Znf_C2H2_type"/>
</dbReference>
<dbReference type="PANTHER" id="PTHR23235">
    <property type="entry name" value="KRUEPPEL-LIKE TRANSCRIPTION FACTOR"/>
    <property type="match status" value="1"/>
</dbReference>
<dbReference type="PANTHER" id="PTHR23235:SF26">
    <property type="entry name" value="TRANSCRIPTION FACTOR SP9"/>
    <property type="match status" value="1"/>
</dbReference>
<dbReference type="Pfam" id="PF00096">
    <property type="entry name" value="zf-C2H2"/>
    <property type="match status" value="3"/>
</dbReference>
<dbReference type="SMART" id="SM00355">
    <property type="entry name" value="ZnF_C2H2"/>
    <property type="match status" value="3"/>
</dbReference>
<dbReference type="SUPFAM" id="SSF57667">
    <property type="entry name" value="beta-beta-alpha zinc fingers"/>
    <property type="match status" value="2"/>
</dbReference>
<dbReference type="PROSITE" id="PS00028">
    <property type="entry name" value="ZINC_FINGER_C2H2_1"/>
    <property type="match status" value="3"/>
</dbReference>
<dbReference type="PROSITE" id="PS50157">
    <property type="entry name" value="ZINC_FINGER_C2H2_2"/>
    <property type="match status" value="3"/>
</dbReference>
<gene>
    <name type="primary">Sp9</name>
</gene>
<name>SP9_MOUSE</name>
<evidence type="ECO:0000250" key="1">
    <source>
        <dbReference type="UniProtKB" id="P0CG40"/>
    </source>
</evidence>
<evidence type="ECO:0000255" key="2">
    <source>
        <dbReference type="PROSITE-ProRule" id="PRU00042"/>
    </source>
</evidence>
<evidence type="ECO:0000256" key="3">
    <source>
        <dbReference type="SAM" id="MobiDB-lite"/>
    </source>
</evidence>
<evidence type="ECO:0000269" key="4">
    <source>
    </source>
</evidence>
<evidence type="ECO:0000303" key="5">
    <source ref="2"/>
</evidence>
<evidence type="ECO:0000305" key="6"/>
<evidence type="ECO:0007744" key="7">
    <source>
    </source>
</evidence>
<organism>
    <name type="scientific">Mus musculus</name>
    <name type="common">Mouse</name>
    <dbReference type="NCBI Taxonomy" id="10090"/>
    <lineage>
        <taxon>Eukaryota</taxon>
        <taxon>Metazoa</taxon>
        <taxon>Chordata</taxon>
        <taxon>Craniata</taxon>
        <taxon>Vertebrata</taxon>
        <taxon>Euteleostomi</taxon>
        <taxon>Mammalia</taxon>
        <taxon>Eutheria</taxon>
        <taxon>Euarchontoglires</taxon>
        <taxon>Glires</taxon>
        <taxon>Rodentia</taxon>
        <taxon>Myomorpha</taxon>
        <taxon>Muroidea</taxon>
        <taxon>Muridae</taxon>
        <taxon>Murinae</taxon>
        <taxon>Mus</taxon>
        <taxon>Mus</taxon>
    </lineage>
</organism>
<sequence length="484" mass="48959">MATSILGEEPRFGTTPLAMLAATCNKIGNTSPLTTLPESSAFAKGGFHPWKRSSSSCNLGSSLSGFAVATGGRGSGSLAGGSGAANSAFCLASTSPTSSAFSSDYGGLFSNSAAAAAAAAGVSPQEAGGQSAFISKVHTTAADGLYPRVGMAHPYESWYKSGFHSTLAAGEVTNGAASSWWDVHSSPGSWLEVQNPAGGLQSSLHSGAPQASLHSQLGTYNPDFSSLTHSAFSSTGLGSSAAAASHLLSTSQHLLAQDGFKPVLPSYSDSSAAVAAAAASAMISGAAAAAAGGSSARSARRYSGRATCDCPNCQEAERLGPAGASLRRKGLHSCHIPGCGKVYGKTSHLKAHLRWHTGERPFVCNWLFCGKRFTRSDELQRHLRTHTGEKRFACPVCNKRFMRSDHLSKHIKTHNGGGGGKKGSDSDTDASNLETPRSESPDLILHDSGVSAARAAAAAAAAAAAAAAAASAGGKEAATGPNDS</sequence>
<reference key="1">
    <citation type="journal article" date="2004" name="Development">
        <title>Sp8 and Sp9, two closely related buttonhead-like transcription factors, regulate Fgf8 expression and limb outgrowth in vertebrate embryos.</title>
        <authorList>
            <person name="Kawakami Y."/>
            <person name="Rodriguez Esteban C."/>
            <person name="Matsui T."/>
            <person name="Rodriguez-Leon J."/>
            <person name="Kato S."/>
            <person name="Izpisua Belmonte J.C."/>
        </authorList>
    </citation>
    <scope>NUCLEOTIDE SEQUENCE [MRNA] (ISOFORM 1)</scope>
    <scope>FUNCTION</scope>
    <scope>DEVELOPMENTAL STAGE</scope>
    <source>
        <strain>C57BL/6J</strain>
    </source>
</reference>
<reference key="2">
    <citation type="submission" date="2004-10" db="EMBL/GenBank/DDBJ databases">
        <title>Sp8 and Sp9 two novel murine Sp proteins are activators and inhibitors of promoter activity.</title>
        <authorList>
            <person name="Favot L."/>
            <person name="Balmer J."/>
            <person name="Scott C."/>
            <person name="Kemp P.R."/>
        </authorList>
    </citation>
    <scope>NUCLEOTIDE SEQUENCE [MRNA] (ISOFORM 2)</scope>
    <source>
        <strain>C57BL/6J</strain>
        <tissue>Brain</tissue>
    </source>
</reference>
<reference key="3">
    <citation type="journal article" date="2009" name="PLoS Biol.">
        <title>Lineage-specific biology revealed by a finished genome assembly of the mouse.</title>
        <authorList>
            <person name="Church D.M."/>
            <person name="Goodstadt L."/>
            <person name="Hillier L.W."/>
            <person name="Zody M.C."/>
            <person name="Goldstein S."/>
            <person name="She X."/>
            <person name="Bult C.J."/>
            <person name="Agarwala R."/>
            <person name="Cherry J.L."/>
            <person name="DiCuccio M."/>
            <person name="Hlavina W."/>
            <person name="Kapustin Y."/>
            <person name="Meric P."/>
            <person name="Maglott D."/>
            <person name="Birtle Z."/>
            <person name="Marques A.C."/>
            <person name="Graves T."/>
            <person name="Zhou S."/>
            <person name="Teague B."/>
            <person name="Potamousis K."/>
            <person name="Churas C."/>
            <person name="Place M."/>
            <person name="Herschleb J."/>
            <person name="Runnheim R."/>
            <person name="Forrest D."/>
            <person name="Amos-Landgraf J."/>
            <person name="Schwartz D.C."/>
            <person name="Cheng Z."/>
            <person name="Lindblad-Toh K."/>
            <person name="Eichler E.E."/>
            <person name="Ponting C.P."/>
        </authorList>
    </citation>
    <scope>NUCLEOTIDE SEQUENCE [LARGE SCALE GENOMIC DNA]</scope>
    <source>
        <strain>C57BL/6J</strain>
    </source>
</reference>
<reference key="4">
    <citation type="journal article" date="2004" name="Genome Res.">
        <title>The status, quality, and expansion of the NIH full-length cDNA project: the Mammalian Gene Collection (MGC).</title>
        <authorList>
            <consortium name="The MGC Project Team"/>
        </authorList>
    </citation>
    <scope>NUCLEOTIDE SEQUENCE [LARGE SCALE MRNA] (ISOFORM 1)</scope>
    <source>
        <tissue>Brain</tissue>
        <tissue>Testis</tissue>
    </source>
</reference>
<reference key="5">
    <citation type="journal article" date="2010" name="Cell">
        <title>A tissue-specific atlas of mouse protein phosphorylation and expression.</title>
        <authorList>
            <person name="Huttlin E.L."/>
            <person name="Jedrychowski M.P."/>
            <person name="Elias J.E."/>
            <person name="Goswami T."/>
            <person name="Rad R."/>
            <person name="Beausoleil S.A."/>
            <person name="Villen J."/>
            <person name="Haas W."/>
            <person name="Sowa M.E."/>
            <person name="Gygi S.P."/>
        </authorList>
    </citation>
    <scope>PHOSPHORYLATION [LARGE SCALE ANALYSIS] AT SER-440</scope>
    <scope>IDENTIFICATION BY MASS SPECTROMETRY [LARGE SCALE ANALYSIS]</scope>
    <source>
        <tissue>Brain</tissue>
    </source>
</reference>
<protein>
    <recommendedName>
        <fullName>Transcription factor Sp9</fullName>
    </recommendedName>
</protein>
<accession>Q64HY3</accession>
<accession>Q5QR89</accession>
<comment type="function">
    <text evidence="4">Transcription factor which plays a key role in limb development. Positively regulates FGF8 expression in the apical ectodermal ridge (AER) and contributes to limb outgrowth in embryos.</text>
</comment>
<comment type="subcellular location">
    <subcellularLocation>
        <location evidence="6">Nucleus</location>
    </subcellularLocation>
</comment>
<comment type="alternative products">
    <event type="alternative splicing"/>
    <isoform>
        <id>Q64HY3-1</id>
        <name>1</name>
        <sequence type="displayed"/>
    </isoform>
    <isoform>
        <id>Q64HY3-2</id>
        <name>2</name>
        <sequence type="described" ref="VSP_039467"/>
    </isoform>
</comment>
<comment type="developmental stage">
    <text evidence="4">Detected in the apical ectodermal ridge (AER) during limb development as well as in the distal region of the ectoderm.</text>
</comment>
<comment type="domain">
    <text evidence="1">The 9aaTAD motif is a transactivation domain present in a large number of yeast and animal transcription factors. In SP9, the motif is inactive.</text>
</comment>
<comment type="similarity">
    <text evidence="6">Belongs to the Sp1 C2H2-type zinc-finger protein family.</text>
</comment>
<keyword id="KW-0025">Alternative splicing</keyword>
<keyword id="KW-0238">DNA-binding</keyword>
<keyword id="KW-0479">Metal-binding</keyword>
<keyword id="KW-0539">Nucleus</keyword>
<keyword id="KW-0597">Phosphoprotein</keyword>
<keyword id="KW-1185">Reference proteome</keyword>
<keyword id="KW-0677">Repeat</keyword>
<keyword id="KW-0804">Transcription</keyword>
<keyword id="KW-0805">Transcription regulation</keyword>
<keyword id="KW-0862">Zinc</keyword>
<keyword id="KW-0863">Zinc-finger</keyword>
<feature type="chain" id="PRO_0000395451" description="Transcription factor Sp9">
    <location>
        <begin position="1"/>
        <end position="484"/>
    </location>
</feature>
<feature type="zinc finger region" description="C2H2-type 1" evidence="2">
    <location>
        <begin position="332"/>
        <end position="356"/>
    </location>
</feature>
<feature type="zinc finger region" description="C2H2-type 2" evidence="2">
    <location>
        <begin position="362"/>
        <end position="386"/>
    </location>
</feature>
<feature type="zinc finger region" description="C2H2-type 3" evidence="2">
    <location>
        <begin position="392"/>
        <end position="414"/>
    </location>
</feature>
<feature type="region of interest" description="Disordered" evidence="3">
    <location>
        <begin position="409"/>
        <end position="446"/>
    </location>
</feature>
<feature type="short sequence motif" description="9aaTAD; inactive" evidence="1">
    <location>
        <begin position="178"/>
        <end position="186"/>
    </location>
</feature>
<feature type="modified residue" description="Phosphoserine" evidence="7">
    <location>
        <position position="440"/>
    </location>
</feature>
<feature type="splice variant" id="VSP_039467" description="In isoform 2." evidence="5">
    <location>
        <begin position="1"/>
        <end position="18"/>
    </location>
</feature>
<feature type="sequence conflict" description="In Ref. 2; CAH59970." evidence="6" ref="2">
    <original>A</original>
    <variation>S</variation>
    <location>
        <position position="273"/>
    </location>
</feature>